<protein>
    <recommendedName>
        <fullName>K88 fimbrial protein AD</fullName>
    </recommendedName>
    <alternativeName>
        <fullName>K88 antigen</fullName>
    </alternativeName>
    <alternativeName>
        <fullName>K88 pilin</fullName>
    </alternativeName>
</protein>
<proteinExistence type="evidence at protein level"/>
<name>FAEG3_ECOLX</name>
<comment type="function">
    <text>K88 major fimbrial subunit. Fimbriae (also called pili), are polar filaments radiating from the surface of the bacterium to a length of 0.5-1.5 micrometers and numbering 100-300 per cell. They enable bacteria to colonize the epithelium of specific host organs.</text>
</comment>
<comment type="subunit">
    <text>K88 fimbria, 0.1-1 micrometer in length and 7 nanometers in diameter, is composed of about 100 identical subunits.</text>
</comment>
<comment type="subcellular location">
    <subcellularLocation>
        <location>Fimbrium</location>
    </subcellularLocation>
</comment>
<comment type="miscellaneous">
    <text>The protein exists in several antigenic variants.</text>
</comment>
<comment type="similarity">
    <text evidence="1">Belongs to the fimbrial K88 protein family.</text>
</comment>
<feature type="signal peptide">
    <location>
        <begin position="1"/>
        <end position="21"/>
    </location>
</feature>
<feature type="chain" id="PRO_0000009196" description="K88 fimbrial protein AD">
    <location>
        <begin position="22"/>
        <end position="285"/>
    </location>
</feature>
<feature type="sequence conflict" description="In Ref. 2; AAA24036." evidence="1" ref="2">
    <original>N</original>
    <variation>S</variation>
    <location>
        <position position="59"/>
    </location>
</feature>
<feature type="sequence conflict" description="In Ref. 2; AAA24036." evidence="1" ref="2">
    <original>K</original>
    <variation>E</variation>
    <location>
        <position position="70"/>
    </location>
</feature>
<feature type="sequence conflict" description="In Ref. 2; AAA24036." evidence="1" ref="2">
    <original>I</original>
    <variation>S</variation>
    <location>
        <position position="81"/>
    </location>
</feature>
<feature type="sequence conflict" description="In Ref. 2; AAA24036." evidence="1" ref="2">
    <original>K</original>
    <variation>R</variation>
    <location>
        <position position="87"/>
    </location>
</feature>
<feature type="sequence conflict" description="In Ref. 2; AAA24036." evidence="1" ref="2">
    <original>TS</original>
    <variation>VG</variation>
    <location>
        <begin position="95"/>
        <end position="96"/>
    </location>
</feature>
<feature type="sequence conflict" description="In Ref. 2; AAA24036." evidence="1" ref="2">
    <original>T</original>
    <variation>I</variation>
    <location>
        <position position="123"/>
    </location>
</feature>
<feature type="sequence conflict" description="In Ref. 2; AAA24036." evidence="1" ref="2">
    <original>K</original>
    <variation>Q</variation>
    <location>
        <position position="188"/>
    </location>
</feature>
<feature type="sequence conflict" description="In Ref. 2." evidence="1" ref="2">
    <original>E</original>
    <variation>A</variation>
    <location>
        <position position="191"/>
    </location>
</feature>
<feature type="sequence conflict" description="In Ref. 2." evidence="1" ref="2">
    <original>K</original>
    <variation>P</variation>
    <location>
        <position position="193"/>
    </location>
</feature>
<feature type="sequence conflict" description="In Ref. 2; AAA24036." evidence="1" ref="2">
    <original>G</original>
    <variation>R</variation>
    <location>
        <position position="257"/>
    </location>
</feature>
<feature type="strand" evidence="2">
    <location>
        <begin position="27"/>
        <end position="31"/>
    </location>
</feature>
<feature type="strand" evidence="2">
    <location>
        <begin position="34"/>
        <end position="38"/>
    </location>
</feature>
<feature type="strand" evidence="2">
    <location>
        <begin position="46"/>
        <end position="50"/>
    </location>
</feature>
<feature type="strand" evidence="2">
    <location>
        <begin position="53"/>
        <end position="55"/>
    </location>
</feature>
<feature type="strand" evidence="2">
    <location>
        <begin position="57"/>
        <end position="60"/>
    </location>
</feature>
<feature type="helix" evidence="2">
    <location>
        <begin position="61"/>
        <end position="63"/>
    </location>
</feature>
<feature type="turn" evidence="2">
    <location>
        <begin position="66"/>
        <end position="69"/>
    </location>
</feature>
<feature type="strand" evidence="2">
    <location>
        <begin position="70"/>
        <end position="74"/>
    </location>
</feature>
<feature type="strand" evidence="2">
    <location>
        <begin position="79"/>
        <end position="88"/>
    </location>
</feature>
<feature type="strand" evidence="2">
    <location>
        <begin position="90"/>
        <end position="93"/>
    </location>
</feature>
<feature type="strand" evidence="2">
    <location>
        <begin position="98"/>
        <end position="107"/>
    </location>
</feature>
<feature type="strand" evidence="2">
    <location>
        <begin position="127"/>
        <end position="135"/>
    </location>
</feature>
<feature type="turn" evidence="3">
    <location>
        <begin position="137"/>
        <end position="139"/>
    </location>
</feature>
<feature type="strand" evidence="2">
    <location>
        <begin position="141"/>
        <end position="158"/>
    </location>
</feature>
<feature type="strand" evidence="2">
    <location>
        <begin position="163"/>
        <end position="171"/>
    </location>
</feature>
<feature type="turn" evidence="4">
    <location>
        <begin position="178"/>
        <end position="182"/>
    </location>
</feature>
<feature type="helix" evidence="2">
    <location>
        <begin position="195"/>
        <end position="205"/>
    </location>
</feature>
<feature type="helix" evidence="2">
    <location>
        <begin position="210"/>
        <end position="220"/>
    </location>
</feature>
<feature type="strand" evidence="2">
    <location>
        <begin position="226"/>
        <end position="235"/>
    </location>
</feature>
<feature type="turn" evidence="3">
    <location>
        <begin position="241"/>
        <end position="243"/>
    </location>
</feature>
<feature type="strand" evidence="2">
    <location>
        <begin position="245"/>
        <end position="254"/>
    </location>
</feature>
<feature type="strand" evidence="2">
    <location>
        <begin position="259"/>
        <end position="266"/>
    </location>
</feature>
<feature type="strand" evidence="2">
    <location>
        <begin position="272"/>
        <end position="275"/>
    </location>
</feature>
<feature type="strand" evidence="2">
    <location>
        <begin position="278"/>
        <end position="284"/>
    </location>
</feature>
<organism>
    <name type="scientific">Escherichia coli</name>
    <dbReference type="NCBI Taxonomy" id="562"/>
    <lineage>
        <taxon>Bacteria</taxon>
        <taxon>Pseudomonadati</taxon>
        <taxon>Pseudomonadota</taxon>
        <taxon>Gammaproteobacteria</taxon>
        <taxon>Enterobacterales</taxon>
        <taxon>Enterobacteriaceae</taxon>
        <taxon>Escherichia</taxon>
    </lineage>
</organism>
<accession>P14191</accession>
<geneLocation type="plasmid">
    <name>pFM205</name>
</geneLocation>
<sequence>MKKTLIALAIAASAASGMAHAWMTGDFNGSVDIGGSITADDYRQKWEWKVGTGLNGFGNVLNDLTNGGTKLTITVTGNKPILLGRTKEAFATPVTSGVDGIPHIAFTDYEGASVELRNPDGETEKGLAYFVLPMKNAEGTKVGSVKVNASYAGALGRGGVTSADGELMSLFAEGSHAIFYGGLPTNVKNSELKGGSAAAARTELFGSLSKNDILGQIQRVNANITSLVNVPGSFNENMAYTDGSVVSVAYALGIANGQTIEATFNQAVTTSTQWSAPLNVAITYY</sequence>
<gene>
    <name type="primary">faeG</name>
</gene>
<reference key="1">
    <citation type="journal article" date="1985" name="Infect. Immun.">
        <title>Nucleotide sequences of four variants of the K88 gene of porcine enterotoxigenic Escherichia coli.</title>
        <authorList>
            <person name="Dykes C.W."/>
            <person name="Halliday I.J."/>
            <person name="Read M.J."/>
            <person name="Hobden A.N."/>
            <person name="Harford S."/>
        </authorList>
    </citation>
    <scope>NUCLEOTIDE SEQUENCE [GENOMIC DNA]</scope>
</reference>
<reference key="2">
    <citation type="journal article" date="1983" name="FEMS Microbiol. Lett.">
        <title>The nucleotide sequence of the K88ad protein subunit of porcine enterotoxigenic Escherichia coli.</title>
        <authorList>
            <person name="Gaastra W."/>
            <person name="Klemm P."/>
            <person name="de Graaf F.K."/>
        </authorList>
    </citation>
    <scope>NUCLEOTIDE SEQUENCE [GENOMIC DNA] OF 28-275</scope>
</reference>
<reference key="3">
    <citation type="journal article" date="1992" name="J. Bacteriol.">
        <title>Identification of minor fimbrial subunits involved in biosynthesis of K88 fimbriae.</title>
        <authorList>
            <person name="Bakker D."/>
            <person name="Willemsen P.T.J."/>
            <person name="Willems R.H."/>
            <person name="Huisman T.T."/>
            <person name="Mooi F.R."/>
            <person name="Oudega B."/>
            <person name="Stegehuis F."/>
            <person name="de Graaf F.K."/>
        </authorList>
    </citation>
    <scope>NUCLEOTIDE SEQUENCE [GENOMIC DNA] OF 1-51 AND 272-285</scope>
</reference>
<dbReference type="EMBL" id="M29376">
    <property type="protein sequence ID" value="AAA24035.1"/>
    <property type="molecule type" value="Genomic_DNA"/>
</dbReference>
<dbReference type="EMBL" id="M35637">
    <property type="protein sequence ID" value="AAA24036.1"/>
    <property type="molecule type" value="Genomic_DNA"/>
</dbReference>
<dbReference type="EMBL" id="Z11699">
    <property type="protein sequence ID" value="CAA77758.1"/>
    <property type="molecule type" value="Genomic_DNA"/>
</dbReference>
<dbReference type="EMBL" id="Z11700">
    <property type="protein sequence ID" value="CAA77759.1"/>
    <property type="molecule type" value="Genomic_DNA"/>
</dbReference>
<dbReference type="EMBL" id="Z11710">
    <property type="protein sequence ID" value="CAA77770.1"/>
    <property type="molecule type" value="Genomic_DNA"/>
</dbReference>
<dbReference type="PIR" id="I41319">
    <property type="entry name" value="I41319"/>
</dbReference>
<dbReference type="PDB" id="3GEA">
    <property type="method" value="X-ray"/>
    <property type="resolution" value="1.70 A"/>
    <property type="chains" value="A/B=43-285"/>
</dbReference>
<dbReference type="PDB" id="3GEW">
    <property type="method" value="X-ray"/>
    <property type="resolution" value="2.00 A"/>
    <property type="chains" value="A/D=43-285"/>
</dbReference>
<dbReference type="PDB" id="3GGH">
    <property type="method" value="X-ray"/>
    <property type="resolution" value="1.64 A"/>
    <property type="chains" value="A/B=43-285"/>
</dbReference>
<dbReference type="PDB" id="3HLR">
    <property type="method" value="X-ray"/>
    <property type="resolution" value="2.30 A"/>
    <property type="chains" value="A=22-285"/>
</dbReference>
<dbReference type="PDB" id="4WEI">
    <property type="method" value="X-ray"/>
    <property type="resolution" value="2.30 A"/>
    <property type="chains" value="A=40-285"/>
</dbReference>
<dbReference type="PDB" id="4WEU">
    <property type="method" value="X-ray"/>
    <property type="resolution" value="2.61 A"/>
    <property type="chains" value="A/B=40-285"/>
</dbReference>
<dbReference type="PDBsum" id="3GEA"/>
<dbReference type="PDBsum" id="3GEW"/>
<dbReference type="PDBsum" id="3GGH"/>
<dbReference type="PDBsum" id="3HLR"/>
<dbReference type="PDBsum" id="4WEI"/>
<dbReference type="PDBsum" id="4WEU"/>
<dbReference type="SMR" id="P14191"/>
<dbReference type="UniLectin" id="P14191"/>
<dbReference type="EvolutionaryTrace" id="P14191"/>
<dbReference type="GO" id="GO:0009289">
    <property type="term" value="C:pilus"/>
    <property type="evidence" value="ECO:0007669"/>
    <property type="project" value="UniProtKB-SubCell"/>
</dbReference>
<dbReference type="GO" id="GO:0007155">
    <property type="term" value="P:cell adhesion"/>
    <property type="evidence" value="ECO:0007669"/>
    <property type="project" value="InterPro"/>
</dbReference>
<dbReference type="InterPro" id="IPR003467">
    <property type="entry name" value="Fimbrial_K88_FaeH"/>
</dbReference>
<dbReference type="Pfam" id="PF02432">
    <property type="entry name" value="Fimbrial_K88"/>
    <property type="match status" value="1"/>
</dbReference>
<evidence type="ECO:0000305" key="1"/>
<evidence type="ECO:0007829" key="2">
    <source>
        <dbReference type="PDB" id="3GGH"/>
    </source>
</evidence>
<evidence type="ECO:0007829" key="3">
    <source>
        <dbReference type="PDB" id="3HLR"/>
    </source>
</evidence>
<evidence type="ECO:0007829" key="4">
    <source>
        <dbReference type="PDB" id="4WEI"/>
    </source>
</evidence>
<keyword id="KW-0002">3D-structure</keyword>
<keyword id="KW-0281">Fimbrium</keyword>
<keyword id="KW-0614">Plasmid</keyword>
<keyword id="KW-0732">Signal</keyword>